<keyword id="KW-0520">NAD</keyword>
<keyword id="KW-0560">Oxidoreductase</keyword>
<keyword id="KW-1185">Reference proteome</keyword>
<comment type="function">
    <text evidence="2 3">Catalyzes the NAD(H)-dependent interconversion of D-fructose 6-phosphate and D-mannitol 1-phosphate in the mannitol metabolic pathway. Has a strong preference for NADH over NADPH.</text>
</comment>
<comment type="catalytic activity">
    <reaction evidence="2 3">
        <text>D-mannitol 1-phosphate + NAD(+) = beta-D-fructose 6-phosphate + NADH + H(+)</text>
        <dbReference type="Rhea" id="RHEA:19661"/>
        <dbReference type="ChEBI" id="CHEBI:15378"/>
        <dbReference type="ChEBI" id="CHEBI:57540"/>
        <dbReference type="ChEBI" id="CHEBI:57634"/>
        <dbReference type="ChEBI" id="CHEBI:57945"/>
        <dbReference type="ChEBI" id="CHEBI:61381"/>
        <dbReference type="EC" id="1.1.1.17"/>
    </reaction>
</comment>
<comment type="biophysicochemical properties">
    <kinetics>
        <KM evidence="2 3">0.23 mM for D-mannitol 1-phosphate</KM>
        <KM evidence="2 3">2.1 mM for D-fructose 6-phosphate</KM>
        <KM evidence="2 3">0.016 mM for NADH</KM>
        <KM evidence="2 3">0.75 mM for NAD(+)</KM>
    </kinetics>
</comment>
<comment type="subunit">
    <text evidence="2">Monomer.</text>
</comment>
<comment type="similarity">
    <text evidence="4">Belongs to the mannitol dehydrogenase family.</text>
</comment>
<evidence type="ECO:0000250" key="1"/>
<evidence type="ECO:0000269" key="2">
    <source>
    </source>
</evidence>
<evidence type="ECO:0000269" key="3">
    <source>
    </source>
</evidence>
<evidence type="ECO:0000305" key="4"/>
<protein>
    <recommendedName>
        <fullName>Mannitol-1-phosphate 5-dehydrogenase</fullName>
        <shortName>M1PDH</shortName>
        <shortName>MPD</shortName>
        <shortName>MPDH</shortName>
        <ecNumber evidence="2 3">1.1.1.17</ecNumber>
    </recommendedName>
</protein>
<dbReference type="EC" id="1.1.1.17" evidence="2 3"/>
<dbReference type="EMBL" id="AAHF01000001">
    <property type="protein sequence ID" value="EAL93361.1"/>
    <property type="molecule type" value="Genomic_DNA"/>
</dbReference>
<dbReference type="RefSeq" id="XP_755399.1">
    <property type="nucleotide sequence ID" value="XM_750306.1"/>
</dbReference>
<dbReference type="SMR" id="Q4X1A4"/>
<dbReference type="STRING" id="330879.Q4X1A4"/>
<dbReference type="SwissPalm" id="Q4X1A4"/>
<dbReference type="EnsemblFungi" id="EAL93361">
    <property type="protein sequence ID" value="EAL93361"/>
    <property type="gene ID" value="AFUA_2G10660"/>
</dbReference>
<dbReference type="GeneID" id="3513687"/>
<dbReference type="KEGG" id="afm:AFUA_2G10660"/>
<dbReference type="VEuPathDB" id="FungiDB:Afu2g10660"/>
<dbReference type="eggNOG" id="ENOG502QVPN">
    <property type="taxonomic scope" value="Eukaryota"/>
</dbReference>
<dbReference type="HOGENOM" id="CLU_036089_0_1_1"/>
<dbReference type="InParanoid" id="Q4X1A4"/>
<dbReference type="OMA" id="APFIERK"/>
<dbReference type="OrthoDB" id="418169at2759"/>
<dbReference type="BRENDA" id="1.1.1.17">
    <property type="organism ID" value="508"/>
</dbReference>
<dbReference type="SABIO-RK" id="Q4X1A4"/>
<dbReference type="Proteomes" id="UP000002530">
    <property type="component" value="Chromosome 2"/>
</dbReference>
<dbReference type="GO" id="GO:0005829">
    <property type="term" value="C:cytosol"/>
    <property type="evidence" value="ECO:0000318"/>
    <property type="project" value="GO_Central"/>
</dbReference>
<dbReference type="GO" id="GO:0008926">
    <property type="term" value="F:mannitol-1-phosphate 5-dehydrogenase activity"/>
    <property type="evidence" value="ECO:0000314"/>
    <property type="project" value="UniProtKB"/>
</dbReference>
<dbReference type="GO" id="GO:0051287">
    <property type="term" value="F:NAD binding"/>
    <property type="evidence" value="ECO:0000314"/>
    <property type="project" value="UniProtKB"/>
</dbReference>
<dbReference type="GO" id="GO:0019592">
    <property type="term" value="P:mannitol catabolic process"/>
    <property type="evidence" value="ECO:0000318"/>
    <property type="project" value="GO_Central"/>
</dbReference>
<dbReference type="GO" id="GO:0019594">
    <property type="term" value="P:mannitol metabolic process"/>
    <property type="evidence" value="ECO:0000305"/>
    <property type="project" value="UniProtKB"/>
</dbReference>
<dbReference type="FunFam" id="1.10.1040.10:FF:000009">
    <property type="entry name" value="Mannitol-1-phosphate 5-dehydrogenase"/>
    <property type="match status" value="1"/>
</dbReference>
<dbReference type="FunFam" id="3.40.50.720:FF:000316">
    <property type="entry name" value="Mannitol-1-phosphate 5-dehydrogenase"/>
    <property type="match status" value="1"/>
</dbReference>
<dbReference type="Gene3D" id="1.10.1040.10">
    <property type="entry name" value="N-(1-d-carboxylethyl)-l-norvaline Dehydrogenase, domain 2"/>
    <property type="match status" value="1"/>
</dbReference>
<dbReference type="Gene3D" id="3.40.50.720">
    <property type="entry name" value="NAD(P)-binding Rossmann-like Domain"/>
    <property type="match status" value="1"/>
</dbReference>
<dbReference type="HAMAP" id="MF_00196">
    <property type="entry name" value="Mannitol_dehydrog"/>
    <property type="match status" value="1"/>
</dbReference>
<dbReference type="InterPro" id="IPR008927">
    <property type="entry name" value="6-PGluconate_DH-like_C_sf"/>
</dbReference>
<dbReference type="InterPro" id="IPR013328">
    <property type="entry name" value="6PGD_dom2"/>
</dbReference>
<dbReference type="InterPro" id="IPR023028">
    <property type="entry name" value="Mannitol_1_phos_5_DH"/>
</dbReference>
<dbReference type="InterPro" id="IPR000669">
    <property type="entry name" value="Mannitol_DH"/>
</dbReference>
<dbReference type="InterPro" id="IPR013118">
    <property type="entry name" value="Mannitol_DH_C"/>
</dbReference>
<dbReference type="InterPro" id="IPR013131">
    <property type="entry name" value="Mannitol_DH_N"/>
</dbReference>
<dbReference type="InterPro" id="IPR036291">
    <property type="entry name" value="NAD(P)-bd_dom_sf"/>
</dbReference>
<dbReference type="NCBIfam" id="NF002652">
    <property type="entry name" value="PRK02318.2-5"/>
    <property type="match status" value="1"/>
</dbReference>
<dbReference type="PANTHER" id="PTHR30524:SF0">
    <property type="entry name" value="ALTRONATE OXIDOREDUCTASE-RELATED"/>
    <property type="match status" value="1"/>
</dbReference>
<dbReference type="PANTHER" id="PTHR30524">
    <property type="entry name" value="MANNITOL-1-PHOSPHATE 5-DEHYDROGENASE"/>
    <property type="match status" value="1"/>
</dbReference>
<dbReference type="Pfam" id="PF01232">
    <property type="entry name" value="Mannitol_dh"/>
    <property type="match status" value="1"/>
</dbReference>
<dbReference type="Pfam" id="PF08125">
    <property type="entry name" value="Mannitol_dh_C"/>
    <property type="match status" value="1"/>
</dbReference>
<dbReference type="PRINTS" id="PR00084">
    <property type="entry name" value="MTLDHDRGNASE"/>
</dbReference>
<dbReference type="SUPFAM" id="SSF48179">
    <property type="entry name" value="6-phosphogluconate dehydrogenase C-terminal domain-like"/>
    <property type="match status" value="1"/>
</dbReference>
<dbReference type="SUPFAM" id="SSF51735">
    <property type="entry name" value="NAD(P)-binding Rossmann-fold domains"/>
    <property type="match status" value="1"/>
</dbReference>
<gene>
    <name type="primary">mpdA</name>
    <name type="ORF">AFUA_2G10660</name>
</gene>
<reference key="1">
    <citation type="journal article" date="2005" name="Nature">
        <title>Genomic sequence of the pathogenic and allergenic filamentous fungus Aspergillus fumigatus.</title>
        <authorList>
            <person name="Nierman W.C."/>
            <person name="Pain A."/>
            <person name="Anderson M.J."/>
            <person name="Wortman J.R."/>
            <person name="Kim H.S."/>
            <person name="Arroyo J."/>
            <person name="Berriman M."/>
            <person name="Abe K."/>
            <person name="Archer D.B."/>
            <person name="Bermejo C."/>
            <person name="Bennett J.W."/>
            <person name="Bowyer P."/>
            <person name="Chen D."/>
            <person name="Collins M."/>
            <person name="Coulsen R."/>
            <person name="Davies R."/>
            <person name="Dyer P.S."/>
            <person name="Farman M.L."/>
            <person name="Fedorova N."/>
            <person name="Fedorova N.D."/>
            <person name="Feldblyum T.V."/>
            <person name="Fischer R."/>
            <person name="Fosker N."/>
            <person name="Fraser A."/>
            <person name="Garcia J.L."/>
            <person name="Garcia M.J."/>
            <person name="Goble A."/>
            <person name="Goldman G.H."/>
            <person name="Gomi K."/>
            <person name="Griffith-Jones S."/>
            <person name="Gwilliam R."/>
            <person name="Haas B.J."/>
            <person name="Haas H."/>
            <person name="Harris D.E."/>
            <person name="Horiuchi H."/>
            <person name="Huang J."/>
            <person name="Humphray S."/>
            <person name="Jimenez J."/>
            <person name="Keller N."/>
            <person name="Khouri H."/>
            <person name="Kitamoto K."/>
            <person name="Kobayashi T."/>
            <person name="Konzack S."/>
            <person name="Kulkarni R."/>
            <person name="Kumagai T."/>
            <person name="Lafton A."/>
            <person name="Latge J.-P."/>
            <person name="Li W."/>
            <person name="Lord A."/>
            <person name="Lu C."/>
            <person name="Majoros W.H."/>
            <person name="May G.S."/>
            <person name="Miller B.L."/>
            <person name="Mohamoud Y."/>
            <person name="Molina M."/>
            <person name="Monod M."/>
            <person name="Mouyna I."/>
            <person name="Mulligan S."/>
            <person name="Murphy L.D."/>
            <person name="O'Neil S."/>
            <person name="Paulsen I."/>
            <person name="Penalva M.A."/>
            <person name="Pertea M."/>
            <person name="Price C."/>
            <person name="Pritchard B.L."/>
            <person name="Quail M.A."/>
            <person name="Rabbinowitsch E."/>
            <person name="Rawlins N."/>
            <person name="Rajandream M.A."/>
            <person name="Reichard U."/>
            <person name="Renauld H."/>
            <person name="Robson G.D."/>
            <person name="Rodriguez de Cordoba S."/>
            <person name="Rodriguez-Pena J.M."/>
            <person name="Ronning C.M."/>
            <person name="Rutter S."/>
            <person name="Salzberg S.L."/>
            <person name="Sanchez M."/>
            <person name="Sanchez-Ferrero J.C."/>
            <person name="Saunders D."/>
            <person name="Seeger K."/>
            <person name="Squares R."/>
            <person name="Squares S."/>
            <person name="Takeuchi M."/>
            <person name="Tekaia F."/>
            <person name="Turner G."/>
            <person name="Vazquez de Aldana C.R."/>
            <person name="Weidman J."/>
            <person name="White O."/>
            <person name="Woodward J.R."/>
            <person name="Yu J.-H."/>
            <person name="Fraser C.M."/>
            <person name="Galagan J.E."/>
            <person name="Asai K."/>
            <person name="Machida M."/>
            <person name="Hall N."/>
            <person name="Barrell B.G."/>
            <person name="Denning D.W."/>
        </authorList>
    </citation>
    <scope>NUCLEOTIDE SEQUENCE [LARGE SCALE GENOMIC DNA]</scope>
    <source>
        <strain>ATCC MYA-4609 / CBS 101355 / FGSC A1100 / Af293</strain>
    </source>
</reference>
<reference key="2">
    <citation type="journal article" date="2008" name="Carbohydr. Res.">
        <title>Characterization of recombinant Aspergillus fumigatus mannitol-1-phosphate 5-dehydrogenase and its application for the stereoselective synthesis of protio and deuterio forms of D-mannitol 1-phosphate.</title>
        <authorList>
            <person name="Krahulec S."/>
            <person name="Armao G.C."/>
            <person name="Weber H."/>
            <person name="Klimacek M."/>
            <person name="Nidetzky B."/>
        </authorList>
    </citation>
    <scope>FUNCTION</scope>
    <scope>SUBUNIT</scope>
    <scope>BIOPHYSICOCHEMICAL PROPERTIES</scope>
    <scope>CATALYTIC ACTIVITY</scope>
</reference>
<reference key="3">
    <citation type="journal article" date="2009" name="Chem. Biol. Interact.">
        <title>Polyol-specific long-chain dehydrogenases/reductases of mannitol metabolism in Aspergillus fumigatus: biochemical characterization and pH studies of mannitol 2-dehydrogenase and mannitol-1-phosphate 5-dehydrogenase.</title>
        <authorList>
            <person name="Krahulec S."/>
            <person name="Armao G.C."/>
            <person name="Bubner P."/>
            <person name="Klimacek M."/>
            <person name="Nidetzky B."/>
        </authorList>
    </citation>
    <scope>BIOPHYSICOCHEMICAL PROPERTIES</scope>
    <scope>MUTAGENESIS OF LYS-213</scope>
    <scope>FUNCTION</scope>
    <scope>CATALYTIC ACTIVITY</scope>
</reference>
<feature type="chain" id="PRO_0000371520" description="Mannitol-1-phosphate 5-dehydrogenase">
    <location>
        <begin position="1"/>
        <end position="388"/>
    </location>
</feature>
<feature type="active site">
    <location>
        <position position="213"/>
    </location>
</feature>
<feature type="binding site" evidence="1">
    <location>
        <begin position="5"/>
        <end position="16"/>
    </location>
    <ligand>
        <name>NAD(+)</name>
        <dbReference type="ChEBI" id="CHEBI:57540"/>
    </ligand>
</feature>
<feature type="mutagenesis site" description="Loss of catalytic activity." evidence="3">
    <original>K</original>
    <variation>A</variation>
    <location>
        <position position="213"/>
    </location>
</feature>
<proteinExistence type="evidence at protein level"/>
<accession>Q4X1A4</accession>
<organism>
    <name type="scientific">Aspergillus fumigatus (strain ATCC MYA-4609 / CBS 101355 / FGSC A1100 / Af293)</name>
    <name type="common">Neosartorya fumigata</name>
    <dbReference type="NCBI Taxonomy" id="330879"/>
    <lineage>
        <taxon>Eukaryota</taxon>
        <taxon>Fungi</taxon>
        <taxon>Dikarya</taxon>
        <taxon>Ascomycota</taxon>
        <taxon>Pezizomycotina</taxon>
        <taxon>Eurotiomycetes</taxon>
        <taxon>Eurotiomycetidae</taxon>
        <taxon>Eurotiales</taxon>
        <taxon>Aspergillaceae</taxon>
        <taxon>Aspergillus</taxon>
        <taxon>Aspergillus subgen. Fumigati</taxon>
    </lineage>
</organism>
<sequence>MGKKAIQFGGGNIGRGFVAEFLHEAGYEVVFIDVVDKIIDALKSTPSYEVTEVSEEGEKTKTITNYRAINSKTNEEDVVKEIGTADVVTCAVGPNVLKFIAPVIAKGIDARTASKPVAVIACENAIGATDTLRGFIEQNTDKDRLSSMSERARFANSAIDRIVPNQPPNAGLNVRIEKFYEWTVEQTPFGEFGHPDIPAIHWVDDLKPYIERKLFTVNTGHATTAYYGHMRGKKMIADALADAEIRQIVHKVLEQTAKLITTKHEITEQEQNEYVDTIVKRMSNPFLEDNVERVGRAPLRKLSRNERFIGPASQLAEKGLPFDALLGSIEMALRFQNVPGDEESAELAKILKEMSAEEATGKLTGLEKHHPLYEPVQNVIAKVQKDSK</sequence>
<name>MTLD_ASPFU</name>